<sequence length="375" mass="42594">MKFELDTTDGRARRGRLVFDRGVVETPCFMPVGTYGTVKGMTPEEVEATGAQIILGNTFHLWLRPGQEIMKLHGDLHDFMQWKGPILTDSGGFQVFSLGDIRKITEQGVHFRNPINGDPIFLDPEKSMEIQYDLGSDIVMIFDECTPYPADWDYAKRSMEMSLRWAKRSRERFDSLGNKNALFGIIQGSVYEDLRDISVKGLVDIGFDGYAVGGLAVGEPKADMHRILEHVCPQIPADKPRYLMGVGKPEDLVEGVRRGIDMFDCVMPTRNARNGHLFVTDGVVKIRNAKYKSDTGPLDPECDCYTCRNYSRAYLHHLDRCNEILGARLNTIHNLRYYQRLMAGLRKAIEEGKLESFVTDFYQRQGREVPPLNVD</sequence>
<gene>
    <name evidence="1" type="primary">tgt</name>
    <name type="ordered locus">E2348C_0341</name>
</gene>
<name>TGT_ECO27</name>
<proteinExistence type="inferred from homology"/>
<feature type="chain" id="PRO_1000198002" description="Queuine tRNA-ribosyltransferase">
    <location>
        <begin position="1"/>
        <end position="375"/>
    </location>
</feature>
<feature type="region of interest" description="RNA binding" evidence="1">
    <location>
        <begin position="245"/>
        <end position="251"/>
    </location>
</feature>
<feature type="region of interest" description="RNA binding; important for wobble base 34 recognition" evidence="1">
    <location>
        <begin position="269"/>
        <end position="273"/>
    </location>
</feature>
<feature type="active site" description="Proton acceptor" evidence="1">
    <location>
        <position position="89"/>
    </location>
</feature>
<feature type="active site" description="Nucleophile" evidence="1">
    <location>
        <position position="264"/>
    </location>
</feature>
<feature type="binding site" evidence="1">
    <location>
        <begin position="89"/>
        <end position="93"/>
    </location>
    <ligand>
        <name>substrate</name>
    </ligand>
</feature>
<feature type="binding site" evidence="1">
    <location>
        <position position="143"/>
    </location>
    <ligand>
        <name>substrate</name>
    </ligand>
</feature>
<feature type="binding site" evidence="1">
    <location>
        <position position="187"/>
    </location>
    <ligand>
        <name>substrate</name>
    </ligand>
</feature>
<feature type="binding site" evidence="1">
    <location>
        <position position="214"/>
    </location>
    <ligand>
        <name>substrate</name>
    </ligand>
</feature>
<feature type="binding site" evidence="1">
    <location>
        <position position="302"/>
    </location>
    <ligand>
        <name>Zn(2+)</name>
        <dbReference type="ChEBI" id="CHEBI:29105"/>
    </ligand>
</feature>
<feature type="binding site" evidence="1">
    <location>
        <position position="304"/>
    </location>
    <ligand>
        <name>Zn(2+)</name>
        <dbReference type="ChEBI" id="CHEBI:29105"/>
    </ligand>
</feature>
<feature type="binding site" evidence="1">
    <location>
        <position position="307"/>
    </location>
    <ligand>
        <name>Zn(2+)</name>
        <dbReference type="ChEBI" id="CHEBI:29105"/>
    </ligand>
</feature>
<feature type="binding site" evidence="1">
    <location>
        <position position="333"/>
    </location>
    <ligand>
        <name>Zn(2+)</name>
        <dbReference type="ChEBI" id="CHEBI:29105"/>
    </ligand>
</feature>
<protein>
    <recommendedName>
        <fullName evidence="1">Queuine tRNA-ribosyltransferase</fullName>
        <ecNumber evidence="1">2.4.2.29</ecNumber>
    </recommendedName>
    <alternativeName>
        <fullName evidence="1">Guanine insertion enzyme</fullName>
    </alternativeName>
    <alternativeName>
        <fullName evidence="1">tRNA-guanine transglycosylase</fullName>
    </alternativeName>
</protein>
<organism>
    <name type="scientific">Escherichia coli O127:H6 (strain E2348/69 / EPEC)</name>
    <dbReference type="NCBI Taxonomy" id="574521"/>
    <lineage>
        <taxon>Bacteria</taxon>
        <taxon>Pseudomonadati</taxon>
        <taxon>Pseudomonadota</taxon>
        <taxon>Gammaproteobacteria</taxon>
        <taxon>Enterobacterales</taxon>
        <taxon>Enterobacteriaceae</taxon>
        <taxon>Escherichia</taxon>
    </lineage>
</organism>
<reference key="1">
    <citation type="journal article" date="2009" name="J. Bacteriol.">
        <title>Complete genome sequence and comparative genome analysis of enteropathogenic Escherichia coli O127:H6 strain E2348/69.</title>
        <authorList>
            <person name="Iguchi A."/>
            <person name="Thomson N.R."/>
            <person name="Ogura Y."/>
            <person name="Saunders D."/>
            <person name="Ooka T."/>
            <person name="Henderson I.R."/>
            <person name="Harris D."/>
            <person name="Asadulghani M."/>
            <person name="Kurokawa K."/>
            <person name="Dean P."/>
            <person name="Kenny B."/>
            <person name="Quail M.A."/>
            <person name="Thurston S."/>
            <person name="Dougan G."/>
            <person name="Hayashi T."/>
            <person name="Parkhill J."/>
            <person name="Frankel G."/>
        </authorList>
    </citation>
    <scope>NUCLEOTIDE SEQUENCE [LARGE SCALE GENOMIC DNA]</scope>
    <source>
        <strain>E2348/69 / EPEC</strain>
    </source>
</reference>
<accession>B7UJM9</accession>
<keyword id="KW-0328">Glycosyltransferase</keyword>
<keyword id="KW-0479">Metal-binding</keyword>
<keyword id="KW-0671">Queuosine biosynthesis</keyword>
<keyword id="KW-1185">Reference proteome</keyword>
<keyword id="KW-0808">Transferase</keyword>
<keyword id="KW-0819">tRNA processing</keyword>
<keyword id="KW-0862">Zinc</keyword>
<dbReference type="EC" id="2.4.2.29" evidence="1"/>
<dbReference type="EMBL" id="FM180568">
    <property type="protein sequence ID" value="CAS07889.1"/>
    <property type="molecule type" value="Genomic_DNA"/>
</dbReference>
<dbReference type="RefSeq" id="WP_000667319.1">
    <property type="nucleotide sequence ID" value="NC_011601.1"/>
</dbReference>
<dbReference type="SMR" id="B7UJM9"/>
<dbReference type="GeneID" id="93777054"/>
<dbReference type="KEGG" id="ecg:E2348C_0341"/>
<dbReference type="HOGENOM" id="CLU_022060_0_1_6"/>
<dbReference type="UniPathway" id="UPA00392"/>
<dbReference type="Proteomes" id="UP000008205">
    <property type="component" value="Chromosome"/>
</dbReference>
<dbReference type="GO" id="GO:0005829">
    <property type="term" value="C:cytosol"/>
    <property type="evidence" value="ECO:0007669"/>
    <property type="project" value="TreeGrafter"/>
</dbReference>
<dbReference type="GO" id="GO:0046872">
    <property type="term" value="F:metal ion binding"/>
    <property type="evidence" value="ECO:0007669"/>
    <property type="project" value="UniProtKB-KW"/>
</dbReference>
<dbReference type="GO" id="GO:0008479">
    <property type="term" value="F:tRNA-guanosine(34) queuine transglycosylase activity"/>
    <property type="evidence" value="ECO:0007669"/>
    <property type="project" value="UniProtKB-UniRule"/>
</dbReference>
<dbReference type="GO" id="GO:0008616">
    <property type="term" value="P:queuosine biosynthetic process"/>
    <property type="evidence" value="ECO:0007669"/>
    <property type="project" value="UniProtKB-UniRule"/>
</dbReference>
<dbReference type="GO" id="GO:0002099">
    <property type="term" value="P:tRNA wobble guanine modification"/>
    <property type="evidence" value="ECO:0007669"/>
    <property type="project" value="TreeGrafter"/>
</dbReference>
<dbReference type="GO" id="GO:0101030">
    <property type="term" value="P:tRNA-guanine transglycosylation"/>
    <property type="evidence" value="ECO:0007669"/>
    <property type="project" value="InterPro"/>
</dbReference>
<dbReference type="FunFam" id="3.20.20.105:FF:000001">
    <property type="entry name" value="Queuine tRNA-ribosyltransferase"/>
    <property type="match status" value="1"/>
</dbReference>
<dbReference type="Gene3D" id="3.20.20.105">
    <property type="entry name" value="Queuine tRNA-ribosyltransferase-like"/>
    <property type="match status" value="1"/>
</dbReference>
<dbReference type="HAMAP" id="MF_00168">
    <property type="entry name" value="Q_tRNA_Tgt"/>
    <property type="match status" value="1"/>
</dbReference>
<dbReference type="InterPro" id="IPR050076">
    <property type="entry name" value="ArchSynthase1/Queuine_TRR"/>
</dbReference>
<dbReference type="InterPro" id="IPR004803">
    <property type="entry name" value="TGT"/>
</dbReference>
<dbReference type="InterPro" id="IPR036511">
    <property type="entry name" value="TGT-like_sf"/>
</dbReference>
<dbReference type="InterPro" id="IPR002616">
    <property type="entry name" value="tRNA_ribo_trans-like"/>
</dbReference>
<dbReference type="NCBIfam" id="TIGR00430">
    <property type="entry name" value="Q_tRNA_tgt"/>
    <property type="match status" value="1"/>
</dbReference>
<dbReference type="NCBIfam" id="TIGR00449">
    <property type="entry name" value="tgt_general"/>
    <property type="match status" value="1"/>
</dbReference>
<dbReference type="PANTHER" id="PTHR46499">
    <property type="entry name" value="QUEUINE TRNA-RIBOSYLTRANSFERASE"/>
    <property type="match status" value="1"/>
</dbReference>
<dbReference type="PANTHER" id="PTHR46499:SF1">
    <property type="entry name" value="QUEUINE TRNA-RIBOSYLTRANSFERASE"/>
    <property type="match status" value="1"/>
</dbReference>
<dbReference type="Pfam" id="PF01702">
    <property type="entry name" value="TGT"/>
    <property type="match status" value="1"/>
</dbReference>
<dbReference type="SUPFAM" id="SSF51713">
    <property type="entry name" value="tRNA-guanine transglycosylase"/>
    <property type="match status" value="1"/>
</dbReference>
<evidence type="ECO:0000255" key="1">
    <source>
        <dbReference type="HAMAP-Rule" id="MF_00168"/>
    </source>
</evidence>
<comment type="function">
    <text evidence="1">Catalyzes the base-exchange of a guanine (G) residue with the queuine precursor 7-aminomethyl-7-deazaguanine (PreQ1) at position 34 (anticodon wobble position) in tRNAs with GU(N) anticodons (tRNA-Asp, -Asn, -His and -Tyr). Catalysis occurs through a double-displacement mechanism. The nucleophile active site attacks the C1' of nucleotide 34 to detach the guanine base from the RNA, forming a covalent enzyme-RNA intermediate. The proton acceptor active site deprotonates the incoming PreQ1, allowing a nucleophilic attack on the C1' of the ribose to form the product. After dissociation, two additional enzymatic reactions on the tRNA convert PreQ1 to queuine (Q), resulting in the hypermodified nucleoside queuosine (7-(((4,5-cis-dihydroxy-2-cyclopenten-1-yl)amino)methyl)-7-deazaguanosine).</text>
</comment>
<comment type="catalytic activity">
    <reaction evidence="1">
        <text>7-aminomethyl-7-carbaguanine + guanosine(34) in tRNA = 7-aminomethyl-7-carbaguanosine(34) in tRNA + guanine</text>
        <dbReference type="Rhea" id="RHEA:24104"/>
        <dbReference type="Rhea" id="RHEA-COMP:10341"/>
        <dbReference type="Rhea" id="RHEA-COMP:10342"/>
        <dbReference type="ChEBI" id="CHEBI:16235"/>
        <dbReference type="ChEBI" id="CHEBI:58703"/>
        <dbReference type="ChEBI" id="CHEBI:74269"/>
        <dbReference type="ChEBI" id="CHEBI:82833"/>
        <dbReference type="EC" id="2.4.2.29"/>
    </reaction>
</comment>
<comment type="cofactor">
    <cofactor evidence="1">
        <name>Zn(2+)</name>
        <dbReference type="ChEBI" id="CHEBI:29105"/>
    </cofactor>
    <text evidence="1">Binds 1 zinc ion per subunit.</text>
</comment>
<comment type="pathway">
    <text evidence="1">tRNA modification; tRNA-queuosine biosynthesis.</text>
</comment>
<comment type="subunit">
    <text evidence="1">Homodimer. Within each dimer, one monomer is responsible for RNA recognition and catalysis, while the other monomer binds to the replacement base PreQ1.</text>
</comment>
<comment type="similarity">
    <text evidence="1">Belongs to the queuine tRNA-ribosyltransferase family.</text>
</comment>